<sequence>MTLDVGPEDELPDWAAAKEFYQKYDPKDIIGRGVSSVVRRCVHRATGDEFAVKIMEVSAERLSLEQLEEVRDATRREMHILRQVAGHPHIITLIDSYESSSFMFLVFDLMRKGELFDYLTEKVALSEKETRSIMRSLLEAVNFLHVNNIVHRDLKPENILLDDNMQIRLSDFGFSCHLEPGEKLRELCGTPGYLAPEILKCSMDETHPGYGKEVDLWACGVILFTLLAGSPPFWHRRQILMLRMIMEGQYQFSSPEWDDRSNTVKDLIAKLLQVDPNARLTAEQALQHPFFERCKGSQPWNLTPRQRFRVAVWTILAAGRVALSSHRLRPLTKNALLRDPYALRPVRRLIDNCAFRLYGHWVKKGEQQNRAALFQHQPPRPFPIIATDLEGDSSAITEDEVTLVRS</sequence>
<feature type="chain" id="PRO_0000086514" description="Phosphorylase b kinase gamma catalytic chain, liver/testis isoform">
    <location>
        <begin position="1"/>
        <end position="406"/>
    </location>
</feature>
<feature type="domain" description="Protein kinase" evidence="3">
    <location>
        <begin position="24"/>
        <end position="291"/>
    </location>
</feature>
<feature type="region of interest" description="Calmodulin-binding (domain-N)" evidence="1">
    <location>
        <begin position="306"/>
        <end position="330"/>
    </location>
</feature>
<feature type="region of interest" description="Calmodulin-binding (domain-C)" evidence="1">
    <location>
        <begin position="346"/>
        <end position="370"/>
    </location>
</feature>
<feature type="active site" description="Proton acceptor" evidence="3 4">
    <location>
        <position position="153"/>
    </location>
</feature>
<feature type="binding site" evidence="3">
    <location>
        <begin position="30"/>
        <end position="38"/>
    </location>
    <ligand>
        <name>ATP</name>
        <dbReference type="ChEBI" id="CHEBI:30616"/>
    </ligand>
</feature>
<feature type="binding site" evidence="3">
    <location>
        <position position="53"/>
    </location>
    <ligand>
        <name>ATP</name>
        <dbReference type="ChEBI" id="CHEBI:30616"/>
    </ligand>
</feature>
<keyword id="KW-0067">ATP-binding</keyword>
<keyword id="KW-0112">Calmodulin-binding</keyword>
<keyword id="KW-0119">Carbohydrate metabolism</keyword>
<keyword id="KW-0321">Glycogen metabolism</keyword>
<keyword id="KW-0418">Kinase</keyword>
<keyword id="KW-0547">Nucleotide-binding</keyword>
<keyword id="KW-1185">Reference proteome</keyword>
<keyword id="KW-0723">Serine/threonine-protein kinase</keyword>
<keyword id="KW-0808">Transferase</keyword>
<accession>P31325</accession>
<accession>A1A5L8</accession>
<gene>
    <name type="primary">Phkg2</name>
</gene>
<evidence type="ECO:0000250" key="1"/>
<evidence type="ECO:0000250" key="2">
    <source>
        <dbReference type="UniProtKB" id="P15735"/>
    </source>
</evidence>
<evidence type="ECO:0000255" key="3">
    <source>
        <dbReference type="PROSITE-ProRule" id="PRU00159"/>
    </source>
</evidence>
<evidence type="ECO:0000255" key="4">
    <source>
        <dbReference type="PROSITE-ProRule" id="PRU10027"/>
    </source>
</evidence>
<evidence type="ECO:0000269" key="5">
    <source>
    </source>
</evidence>
<evidence type="ECO:0000305" key="6"/>
<organism>
    <name type="scientific">Rattus norvegicus</name>
    <name type="common">Rat</name>
    <dbReference type="NCBI Taxonomy" id="10116"/>
    <lineage>
        <taxon>Eukaryota</taxon>
        <taxon>Metazoa</taxon>
        <taxon>Chordata</taxon>
        <taxon>Craniata</taxon>
        <taxon>Vertebrata</taxon>
        <taxon>Euteleostomi</taxon>
        <taxon>Mammalia</taxon>
        <taxon>Eutheria</taxon>
        <taxon>Euarchontoglires</taxon>
        <taxon>Glires</taxon>
        <taxon>Rodentia</taxon>
        <taxon>Myomorpha</taxon>
        <taxon>Muroidea</taxon>
        <taxon>Muridae</taxon>
        <taxon>Murinae</taxon>
        <taxon>Rattus</taxon>
    </lineage>
</organism>
<dbReference type="EC" id="2.7.11.19" evidence="5"/>
<dbReference type="EMBL" id="M73808">
    <property type="protein sequence ID" value="AAA41863.1"/>
    <property type="molecule type" value="mRNA"/>
</dbReference>
<dbReference type="EMBL" id="BC128715">
    <property type="protein sequence ID" value="AAI28716.1"/>
    <property type="molecule type" value="mRNA"/>
</dbReference>
<dbReference type="PIR" id="A42034">
    <property type="entry name" value="A42034"/>
</dbReference>
<dbReference type="RefSeq" id="NP_542151.1">
    <property type="nucleotide sequence ID" value="NM_080584.4"/>
</dbReference>
<dbReference type="RefSeq" id="XP_008758077.1">
    <property type="nucleotide sequence ID" value="XM_008759855.4"/>
</dbReference>
<dbReference type="RefSeq" id="XP_038937387.1">
    <property type="nucleotide sequence ID" value="XM_039081459.2"/>
</dbReference>
<dbReference type="RefSeq" id="XP_038937457.1">
    <property type="nucleotide sequence ID" value="XM_039081529.2"/>
</dbReference>
<dbReference type="RefSeq" id="XP_063126562.1">
    <property type="nucleotide sequence ID" value="XM_063270492.1"/>
</dbReference>
<dbReference type="SMR" id="P31325"/>
<dbReference type="BioGRID" id="250831">
    <property type="interactions" value="1"/>
</dbReference>
<dbReference type="FunCoup" id="P31325">
    <property type="interactions" value="4040"/>
</dbReference>
<dbReference type="STRING" id="10116.ENSRNOP00000025419"/>
<dbReference type="PhosphoSitePlus" id="P31325"/>
<dbReference type="PaxDb" id="10116-ENSRNOP00000025419"/>
<dbReference type="Ensembl" id="ENSRNOT00000087142.2">
    <property type="protein sequence ID" value="ENSRNOP00000072734.1"/>
    <property type="gene ID" value="ENSRNOG00000018725.7"/>
</dbReference>
<dbReference type="GeneID" id="140671"/>
<dbReference type="KEGG" id="rno:140671"/>
<dbReference type="UCSC" id="RGD:620024">
    <property type="organism name" value="rat"/>
</dbReference>
<dbReference type="AGR" id="RGD:620024"/>
<dbReference type="CTD" id="5261"/>
<dbReference type="RGD" id="620024">
    <property type="gene designation" value="Phkg2"/>
</dbReference>
<dbReference type="eggNOG" id="KOG0599">
    <property type="taxonomic scope" value="Eukaryota"/>
</dbReference>
<dbReference type="GeneTree" id="ENSGT00940000160435"/>
<dbReference type="InParanoid" id="P31325"/>
<dbReference type="OMA" id="FPVMGPE"/>
<dbReference type="OrthoDB" id="419455at2759"/>
<dbReference type="PhylomeDB" id="P31325"/>
<dbReference type="TreeFam" id="TF320349"/>
<dbReference type="BRENDA" id="2.7.11.19">
    <property type="organism ID" value="5301"/>
</dbReference>
<dbReference type="Reactome" id="R-RNO-70221">
    <property type="pathway name" value="Glycogen breakdown (glycogenolysis)"/>
</dbReference>
<dbReference type="PRO" id="PR:P31325"/>
<dbReference type="Proteomes" id="UP000002494">
    <property type="component" value="Chromosome 1"/>
</dbReference>
<dbReference type="Bgee" id="ENSRNOG00000018725">
    <property type="expression patterns" value="Expressed in testis and 20 other cell types or tissues"/>
</dbReference>
<dbReference type="GO" id="GO:0005737">
    <property type="term" value="C:cytoplasm"/>
    <property type="evidence" value="ECO:0000318"/>
    <property type="project" value="GO_Central"/>
</dbReference>
<dbReference type="GO" id="GO:0005829">
    <property type="term" value="C:cytosol"/>
    <property type="evidence" value="ECO:0007669"/>
    <property type="project" value="Ensembl"/>
</dbReference>
<dbReference type="GO" id="GO:0005964">
    <property type="term" value="C:phosphorylase kinase complex"/>
    <property type="evidence" value="ECO:0000314"/>
    <property type="project" value="RGD"/>
</dbReference>
<dbReference type="GO" id="GO:0005524">
    <property type="term" value="F:ATP binding"/>
    <property type="evidence" value="ECO:0000314"/>
    <property type="project" value="RGD"/>
</dbReference>
<dbReference type="GO" id="GO:0005516">
    <property type="term" value="F:calmodulin binding"/>
    <property type="evidence" value="ECO:0000314"/>
    <property type="project" value="RGD"/>
</dbReference>
<dbReference type="GO" id="GO:0019899">
    <property type="term" value="F:enzyme binding"/>
    <property type="evidence" value="ECO:0000314"/>
    <property type="project" value="RGD"/>
</dbReference>
<dbReference type="GO" id="GO:0004689">
    <property type="term" value="F:phosphorylase kinase activity"/>
    <property type="evidence" value="ECO:0000314"/>
    <property type="project" value="RGD"/>
</dbReference>
<dbReference type="GO" id="GO:0005980">
    <property type="term" value="P:glycogen catabolic process"/>
    <property type="evidence" value="ECO:0000266"/>
    <property type="project" value="RGD"/>
</dbReference>
<dbReference type="GO" id="GO:0005977">
    <property type="term" value="P:glycogen metabolic process"/>
    <property type="evidence" value="ECO:0000314"/>
    <property type="project" value="RGD"/>
</dbReference>
<dbReference type="GO" id="GO:0045819">
    <property type="term" value="P:positive regulation of glycogen catabolic process"/>
    <property type="evidence" value="ECO:0000315"/>
    <property type="project" value="FlyBase"/>
</dbReference>
<dbReference type="GO" id="GO:0007165">
    <property type="term" value="P:signal transduction"/>
    <property type="evidence" value="ECO:0000318"/>
    <property type="project" value="GO_Central"/>
</dbReference>
<dbReference type="CDD" id="cd14181">
    <property type="entry name" value="STKc_PhKG2"/>
    <property type="match status" value="1"/>
</dbReference>
<dbReference type="FunFam" id="3.30.200.20:FF:000138">
    <property type="entry name" value="Phosphorylase b kinase gamma catalytic chain, liver/testis"/>
    <property type="match status" value="1"/>
</dbReference>
<dbReference type="FunFam" id="1.10.510.10:FF:000149">
    <property type="entry name" value="phosphorylase b kinase gamma catalytic chain, liver/testis isoform"/>
    <property type="match status" value="1"/>
</dbReference>
<dbReference type="Gene3D" id="3.30.200.20">
    <property type="entry name" value="Phosphorylase Kinase, domain 1"/>
    <property type="match status" value="1"/>
</dbReference>
<dbReference type="Gene3D" id="1.10.510.10">
    <property type="entry name" value="Transferase(Phosphotransferase) domain 1"/>
    <property type="match status" value="1"/>
</dbReference>
<dbReference type="InterPro" id="IPR011009">
    <property type="entry name" value="Kinase-like_dom_sf"/>
</dbReference>
<dbReference type="InterPro" id="IPR002291">
    <property type="entry name" value="Phosph_kin_gamma"/>
</dbReference>
<dbReference type="InterPro" id="IPR000719">
    <property type="entry name" value="Prot_kinase_dom"/>
</dbReference>
<dbReference type="InterPro" id="IPR017441">
    <property type="entry name" value="Protein_kinase_ATP_BS"/>
</dbReference>
<dbReference type="InterPro" id="IPR008271">
    <property type="entry name" value="Ser/Thr_kinase_AS"/>
</dbReference>
<dbReference type="PANTHER" id="PTHR24347">
    <property type="entry name" value="SERINE/THREONINE-PROTEIN KINASE"/>
    <property type="match status" value="1"/>
</dbReference>
<dbReference type="Pfam" id="PF00069">
    <property type="entry name" value="Pkinase"/>
    <property type="match status" value="1"/>
</dbReference>
<dbReference type="PRINTS" id="PR01049">
    <property type="entry name" value="PHOSPHBKNASE"/>
</dbReference>
<dbReference type="SMART" id="SM00220">
    <property type="entry name" value="S_TKc"/>
    <property type="match status" value="1"/>
</dbReference>
<dbReference type="SUPFAM" id="SSF56112">
    <property type="entry name" value="Protein kinase-like (PK-like)"/>
    <property type="match status" value="1"/>
</dbReference>
<dbReference type="PROSITE" id="PS00107">
    <property type="entry name" value="PROTEIN_KINASE_ATP"/>
    <property type="match status" value="1"/>
</dbReference>
<dbReference type="PROSITE" id="PS50011">
    <property type="entry name" value="PROTEIN_KINASE_DOM"/>
    <property type="match status" value="1"/>
</dbReference>
<dbReference type="PROSITE" id="PS00108">
    <property type="entry name" value="PROTEIN_KINASE_ST"/>
    <property type="match status" value="1"/>
</dbReference>
<protein>
    <recommendedName>
        <fullName>Phosphorylase b kinase gamma catalytic chain, liver/testis isoform</fullName>
        <shortName>PHK-gamma-LT</shortName>
        <shortName>PHK-gamma-T</shortName>
        <ecNumber evidence="5">2.7.11.19</ecNumber>
    </recommendedName>
    <alternativeName>
        <fullName>Phosphorylase kinase subunit gamma-2</fullName>
    </alternativeName>
</protein>
<comment type="function">
    <text evidence="5">Catalytic subunit of the phosphorylase b kinase (PHK), which mediates the neural and hormonal regulation of glycogen breakdown (glycogenolysis) by phosphorylating and thereby activating glycogen phosphorylase. May regulate glycogeneolysis in the testis. In vitro, phosphorylates PYGM.</text>
</comment>
<comment type="catalytic activity">
    <reaction evidence="5">
        <text>2 ATP + phosphorylase b = 2 ADP + phosphorylase a.</text>
        <dbReference type="EC" id="2.7.11.19"/>
    </reaction>
</comment>
<comment type="subunit">
    <text evidence="2">Hexadecamer of 4 heterotetramers, each composed of alpha, beta, gamma, and delta subunits. Alpha (PHKA1 or PHKA2) and beta (PHKB) are regulatory subunits, gamma (PHKG1 or PHKG2) is the catalytic subunit, and delta is calmodulin.</text>
</comment>
<comment type="similarity">
    <text evidence="6">Belongs to the protein kinase superfamily. CAMK Ser/Thr protein kinase family.</text>
</comment>
<name>PHKG2_RAT</name>
<proteinExistence type="evidence at protein level"/>
<reference key="1">
    <citation type="journal article" date="1992" name="J. Biol. Chem.">
        <title>Molecular cloning and enzymatic analysis of the rat homolog of 'PhK-gamma T,' an isoform of phosphorylase kinase catalytic subunit.</title>
        <authorList>
            <person name="Calalb M.B."/>
            <person name="Fox D.T."/>
            <person name="Hanks S.K."/>
        </authorList>
    </citation>
    <scope>NUCLEOTIDE SEQUENCE [MRNA]</scope>
    <scope>CATALYTIC ACTIVITY</scope>
</reference>
<reference key="2">
    <citation type="journal article" date="2004" name="Genome Res.">
        <title>The status, quality, and expansion of the NIH full-length cDNA project: the Mammalian Gene Collection (MGC).</title>
        <authorList>
            <consortium name="The MGC Project Team"/>
        </authorList>
    </citation>
    <scope>NUCLEOTIDE SEQUENCE [LARGE SCALE MRNA]</scope>
    <source>
        <tissue>Testis</tissue>
    </source>
</reference>